<organism>
    <name type="scientific">Mus musculus</name>
    <name type="common">Mouse</name>
    <dbReference type="NCBI Taxonomy" id="10090"/>
    <lineage>
        <taxon>Eukaryota</taxon>
        <taxon>Metazoa</taxon>
        <taxon>Chordata</taxon>
        <taxon>Craniata</taxon>
        <taxon>Vertebrata</taxon>
        <taxon>Euteleostomi</taxon>
        <taxon>Mammalia</taxon>
        <taxon>Eutheria</taxon>
        <taxon>Euarchontoglires</taxon>
        <taxon>Glires</taxon>
        <taxon>Rodentia</taxon>
        <taxon>Myomorpha</taxon>
        <taxon>Muroidea</taxon>
        <taxon>Muridae</taxon>
        <taxon>Murinae</taxon>
        <taxon>Mus</taxon>
        <taxon>Mus</taxon>
    </lineage>
</organism>
<name>CLUS_MOUSE</name>
<dbReference type="EMBL" id="D14077">
    <property type="protein sequence ID" value="BAA03162.1"/>
    <property type="molecule type" value="mRNA"/>
</dbReference>
<dbReference type="EMBL" id="L08235">
    <property type="protein sequence ID" value="AAA37422.1"/>
    <property type="molecule type" value="mRNA"/>
</dbReference>
<dbReference type="EMBL" id="S70244">
    <property type="protein sequence ID" value="AAB30623.1"/>
    <property type="molecule type" value="mRNA"/>
</dbReference>
<dbReference type="EMBL" id="L05670">
    <property type="protein sequence ID" value="AAA37284.1"/>
    <property type="molecule type" value="mRNA"/>
</dbReference>
<dbReference type="EMBL" id="BC075668">
    <property type="protein sequence ID" value="AAH75668.1"/>
    <property type="molecule type" value="mRNA"/>
</dbReference>
<dbReference type="CCDS" id="CCDS36957.1"/>
<dbReference type="PIR" id="A40714">
    <property type="entry name" value="A40714"/>
</dbReference>
<dbReference type="PIR" id="I56335">
    <property type="entry name" value="I56335"/>
</dbReference>
<dbReference type="RefSeq" id="NP_001409150.1">
    <property type="nucleotide sequence ID" value="NM_001422221.1"/>
</dbReference>
<dbReference type="RefSeq" id="NP_001409151.1">
    <property type="nucleotide sequence ID" value="NM_001422222.1"/>
</dbReference>
<dbReference type="RefSeq" id="NP_001409152.1">
    <property type="nucleotide sequence ID" value="NM_001422223.1"/>
</dbReference>
<dbReference type="RefSeq" id="NP_001409153.1">
    <property type="nucleotide sequence ID" value="NM_001422224.1"/>
</dbReference>
<dbReference type="RefSeq" id="NP_038520.2">
    <property type="nucleotide sequence ID" value="NM_013492.4"/>
</dbReference>
<dbReference type="RefSeq" id="XP_006518567.1">
    <property type="nucleotide sequence ID" value="XM_006518504.3"/>
</dbReference>
<dbReference type="SMR" id="Q06890"/>
<dbReference type="BioGRID" id="198760">
    <property type="interactions" value="32"/>
</dbReference>
<dbReference type="FunCoup" id="Q06890">
    <property type="interactions" value="459"/>
</dbReference>
<dbReference type="IntAct" id="Q06890">
    <property type="interactions" value="5"/>
</dbReference>
<dbReference type="MINT" id="Q06890"/>
<dbReference type="STRING" id="10090.ENSMUSP00000022616"/>
<dbReference type="GlyConnect" id="761">
    <property type="glycosylation" value="5 N-Linked glycans (2 sites)"/>
</dbReference>
<dbReference type="GlyCosmos" id="Q06890">
    <property type="glycosylation" value="6 sites, 7 glycans"/>
</dbReference>
<dbReference type="GlyGen" id="Q06890">
    <property type="glycosylation" value="8 sites, 10 N-linked glycans (3 sites), 1 O-linked glycan (2 sites)"/>
</dbReference>
<dbReference type="iPTMnet" id="Q06890"/>
<dbReference type="MetOSite" id="Q06890"/>
<dbReference type="PhosphoSitePlus" id="Q06890"/>
<dbReference type="SwissPalm" id="Q06890"/>
<dbReference type="CPTAC" id="non-CPTAC-5592"/>
<dbReference type="CPTAC" id="non-CPTAC-5593"/>
<dbReference type="CPTAC" id="non-CPTAC-5594"/>
<dbReference type="jPOST" id="Q06890"/>
<dbReference type="PaxDb" id="10090-ENSMUSP00000022616"/>
<dbReference type="PeptideAtlas" id="Q06890"/>
<dbReference type="ProteomicsDB" id="283529"/>
<dbReference type="Antibodypedia" id="631">
    <property type="antibodies" value="1353 antibodies from 51 providers"/>
</dbReference>
<dbReference type="DNASU" id="12759"/>
<dbReference type="Ensembl" id="ENSMUST00000022616.14">
    <property type="protein sequence ID" value="ENSMUSP00000022616.7"/>
    <property type="gene ID" value="ENSMUSG00000022037.16"/>
</dbReference>
<dbReference type="GeneID" id="12759"/>
<dbReference type="KEGG" id="mmu:12759"/>
<dbReference type="UCSC" id="uc007ujs.2">
    <property type="organism name" value="mouse"/>
</dbReference>
<dbReference type="AGR" id="MGI:88423"/>
<dbReference type="CTD" id="1191"/>
<dbReference type="MGI" id="MGI:88423">
    <property type="gene designation" value="Clu"/>
</dbReference>
<dbReference type="VEuPathDB" id="HostDB:ENSMUSG00000022037"/>
<dbReference type="eggNOG" id="ENOG502RBQP">
    <property type="taxonomic scope" value="Eukaryota"/>
</dbReference>
<dbReference type="GeneTree" id="ENSGT00530000063668"/>
<dbReference type="HOGENOM" id="CLU_042162_2_0_1"/>
<dbReference type="InParanoid" id="Q06890"/>
<dbReference type="OMA" id="QGSKYIN"/>
<dbReference type="OrthoDB" id="9018825at2759"/>
<dbReference type="PhylomeDB" id="Q06890"/>
<dbReference type="TreeFam" id="TF333030"/>
<dbReference type="Reactome" id="R-MMU-114608">
    <property type="pathway name" value="Platelet degranulation"/>
</dbReference>
<dbReference type="Reactome" id="R-MMU-166665">
    <property type="pathway name" value="Terminal pathway of complement"/>
</dbReference>
<dbReference type="Reactome" id="R-MMU-6803157">
    <property type="pathway name" value="Antimicrobial peptides"/>
</dbReference>
<dbReference type="Reactome" id="R-MMU-977606">
    <property type="pathway name" value="Regulation of Complement cascade"/>
</dbReference>
<dbReference type="BioGRID-ORCS" id="12759">
    <property type="hits" value="0 hits in 78 CRISPR screens"/>
</dbReference>
<dbReference type="CD-CODE" id="CE726F99">
    <property type="entry name" value="Postsynaptic density"/>
</dbReference>
<dbReference type="ChiTaRS" id="Clu">
    <property type="organism name" value="mouse"/>
</dbReference>
<dbReference type="PRO" id="PR:Q06890"/>
<dbReference type="Proteomes" id="UP000000589">
    <property type="component" value="Chromosome 14"/>
</dbReference>
<dbReference type="RNAct" id="Q06890">
    <property type="molecule type" value="protein"/>
</dbReference>
<dbReference type="Bgee" id="ENSMUSG00000022037">
    <property type="expression patterns" value="Expressed in iris and 298 other cell types or tissues"/>
</dbReference>
<dbReference type="ExpressionAtlas" id="Q06890">
    <property type="expression patterns" value="baseline and differential"/>
</dbReference>
<dbReference type="GO" id="GO:0097440">
    <property type="term" value="C:apical dendrite"/>
    <property type="evidence" value="ECO:0000250"/>
    <property type="project" value="Alzheimers_University_of_Toronto"/>
</dbReference>
<dbReference type="GO" id="GO:0071944">
    <property type="term" value="C:cell periphery"/>
    <property type="evidence" value="ECO:0007669"/>
    <property type="project" value="Ensembl"/>
</dbReference>
<dbReference type="GO" id="GO:0009986">
    <property type="term" value="C:cell surface"/>
    <property type="evidence" value="ECO:0007669"/>
    <property type="project" value="Ensembl"/>
</dbReference>
<dbReference type="GO" id="GO:0042583">
    <property type="term" value="C:chromaffin granule"/>
    <property type="evidence" value="ECO:0007669"/>
    <property type="project" value="UniProtKB-SubCell"/>
</dbReference>
<dbReference type="GO" id="GO:0005737">
    <property type="term" value="C:cytoplasm"/>
    <property type="evidence" value="ECO:0000314"/>
    <property type="project" value="UniProtKB"/>
</dbReference>
<dbReference type="GO" id="GO:0005856">
    <property type="term" value="C:cytoskeleton"/>
    <property type="evidence" value="ECO:0007669"/>
    <property type="project" value="Ensembl"/>
</dbReference>
<dbReference type="GO" id="GO:0005829">
    <property type="term" value="C:cytosol"/>
    <property type="evidence" value="ECO:0000314"/>
    <property type="project" value="UniProtKB"/>
</dbReference>
<dbReference type="GO" id="GO:0005615">
    <property type="term" value="C:extracellular space"/>
    <property type="evidence" value="ECO:0007005"/>
    <property type="project" value="BHF-UCL"/>
</dbReference>
<dbReference type="GO" id="GO:0043231">
    <property type="term" value="C:intracellular membrane-bounded organelle"/>
    <property type="evidence" value="ECO:0000250"/>
    <property type="project" value="UniProtKB"/>
</dbReference>
<dbReference type="GO" id="GO:0005743">
    <property type="term" value="C:mitochondrial inner membrane"/>
    <property type="evidence" value="ECO:0000250"/>
    <property type="project" value="UniProtKB"/>
</dbReference>
<dbReference type="GO" id="GO:0005739">
    <property type="term" value="C:mitochondrion"/>
    <property type="evidence" value="ECO:0000314"/>
    <property type="project" value="UniProtKB"/>
</dbReference>
<dbReference type="GO" id="GO:0097418">
    <property type="term" value="C:neurofibrillary tangle"/>
    <property type="evidence" value="ECO:0000250"/>
    <property type="project" value="Alzheimers_University_of_Toronto"/>
</dbReference>
<dbReference type="GO" id="GO:0005634">
    <property type="term" value="C:nucleus"/>
    <property type="evidence" value="ECO:0000314"/>
    <property type="project" value="UniProtKB"/>
</dbReference>
<dbReference type="GO" id="GO:0099020">
    <property type="term" value="C:perinuclear endoplasmic reticulum lumen"/>
    <property type="evidence" value="ECO:0000250"/>
    <property type="project" value="UniProtKB"/>
</dbReference>
<dbReference type="GO" id="GO:0048471">
    <property type="term" value="C:perinuclear region of cytoplasm"/>
    <property type="evidence" value="ECO:0000250"/>
    <property type="project" value="UniProtKB"/>
</dbReference>
<dbReference type="GO" id="GO:0034366">
    <property type="term" value="C:spherical high-density lipoprotein particle"/>
    <property type="evidence" value="ECO:0000250"/>
    <property type="project" value="UniProtKB"/>
</dbReference>
<dbReference type="GO" id="GO:0045202">
    <property type="term" value="C:synapse"/>
    <property type="evidence" value="ECO:0000314"/>
    <property type="project" value="SynGO"/>
</dbReference>
<dbReference type="GO" id="GO:0001540">
    <property type="term" value="F:amyloid-beta binding"/>
    <property type="evidence" value="ECO:0007669"/>
    <property type="project" value="Ensembl"/>
</dbReference>
<dbReference type="GO" id="GO:0050750">
    <property type="term" value="F:low-density lipoprotein particle receptor binding"/>
    <property type="evidence" value="ECO:0007669"/>
    <property type="project" value="Ensembl"/>
</dbReference>
<dbReference type="GO" id="GO:0051787">
    <property type="term" value="F:misfolded protein binding"/>
    <property type="evidence" value="ECO:0000250"/>
    <property type="project" value="UniProtKB"/>
</dbReference>
<dbReference type="GO" id="GO:0140597">
    <property type="term" value="F:protein carrier chaperone"/>
    <property type="evidence" value="ECO:0007669"/>
    <property type="project" value="Ensembl"/>
</dbReference>
<dbReference type="GO" id="GO:0044877">
    <property type="term" value="F:protein-containing complex binding"/>
    <property type="evidence" value="ECO:0007669"/>
    <property type="project" value="Ensembl"/>
</dbReference>
<dbReference type="GO" id="GO:0048018">
    <property type="term" value="F:receptor ligand activity"/>
    <property type="evidence" value="ECO:0007669"/>
    <property type="project" value="Ensembl"/>
</dbReference>
<dbReference type="GO" id="GO:0048156">
    <property type="term" value="F:tau protein binding"/>
    <property type="evidence" value="ECO:0007669"/>
    <property type="project" value="Ensembl"/>
</dbReference>
<dbReference type="GO" id="GO:0031625">
    <property type="term" value="F:ubiquitin protein ligase binding"/>
    <property type="evidence" value="ECO:0000250"/>
    <property type="project" value="UniProtKB"/>
</dbReference>
<dbReference type="GO" id="GO:0051082">
    <property type="term" value="F:unfolded protein binding"/>
    <property type="evidence" value="ECO:0000250"/>
    <property type="project" value="UniProtKB"/>
</dbReference>
<dbReference type="GO" id="GO:0097242">
    <property type="term" value="P:amyloid-beta clearance"/>
    <property type="evidence" value="ECO:0007669"/>
    <property type="project" value="Ensembl"/>
</dbReference>
<dbReference type="GO" id="GO:0000902">
    <property type="term" value="P:cell morphogenesis"/>
    <property type="evidence" value="ECO:0000250"/>
    <property type="project" value="Alzheimers_University_of_Toronto"/>
</dbReference>
<dbReference type="GO" id="GO:0032286">
    <property type="term" value="P:central nervous system myelin maintenance"/>
    <property type="evidence" value="ECO:0000250"/>
    <property type="project" value="Alzheimers_University_of_Toronto"/>
</dbReference>
<dbReference type="GO" id="GO:0051131">
    <property type="term" value="P:chaperone-mediated protein complex assembly"/>
    <property type="evidence" value="ECO:0000250"/>
    <property type="project" value="Alzheimers_University_of_Toronto"/>
</dbReference>
<dbReference type="GO" id="GO:0061077">
    <property type="term" value="P:chaperone-mediated protein folding"/>
    <property type="evidence" value="ECO:0000250"/>
    <property type="project" value="UniProtKB"/>
</dbReference>
<dbReference type="GO" id="GO:0002434">
    <property type="term" value="P:immune complex clearance"/>
    <property type="evidence" value="ECO:0000315"/>
    <property type="project" value="UniProtKB"/>
</dbReference>
<dbReference type="GO" id="GO:0097193">
    <property type="term" value="P:intrinsic apoptotic signaling pathway"/>
    <property type="evidence" value="ECO:0000250"/>
    <property type="project" value="UniProtKB"/>
</dbReference>
<dbReference type="GO" id="GO:0001774">
    <property type="term" value="P:microglial cell activation"/>
    <property type="evidence" value="ECO:0000250"/>
    <property type="project" value="Alzheimers_University_of_Toronto"/>
</dbReference>
<dbReference type="GO" id="GO:0061518">
    <property type="term" value="P:microglial cell proliferation"/>
    <property type="evidence" value="ECO:0000250"/>
    <property type="project" value="Alzheimers_University_of_Toronto"/>
</dbReference>
<dbReference type="GO" id="GO:1905907">
    <property type="term" value="P:negative regulation of amyloid fibril formation"/>
    <property type="evidence" value="ECO:0000315"/>
    <property type="project" value="UniProtKB"/>
</dbReference>
<dbReference type="GO" id="GO:1902430">
    <property type="term" value="P:negative regulation of amyloid-beta formation"/>
    <property type="evidence" value="ECO:0000250"/>
    <property type="project" value="Alzheimers_University_of_Toronto"/>
</dbReference>
<dbReference type="GO" id="GO:1902230">
    <property type="term" value="P:negative regulation of intrinsic apoptotic signaling pathway in response to DNA damage"/>
    <property type="evidence" value="ECO:0000250"/>
    <property type="project" value="UniProtKB"/>
</dbReference>
<dbReference type="GO" id="GO:0031333">
    <property type="term" value="P:negative regulation of protein-containing complex assembly"/>
    <property type="evidence" value="ECO:0000250"/>
    <property type="project" value="UniProtKB"/>
</dbReference>
<dbReference type="GO" id="GO:1903573">
    <property type="term" value="P:negative regulation of response to endoplasmic reticulum stress"/>
    <property type="evidence" value="ECO:0007669"/>
    <property type="project" value="Ensembl"/>
</dbReference>
<dbReference type="GO" id="GO:1902004">
    <property type="term" value="P:positive regulation of amyloid-beta formation"/>
    <property type="evidence" value="ECO:0000315"/>
    <property type="project" value="Alzheimers_University_of_Toronto"/>
</dbReference>
<dbReference type="GO" id="GO:0043065">
    <property type="term" value="P:positive regulation of apoptotic process"/>
    <property type="evidence" value="ECO:0000314"/>
    <property type="project" value="UniProtKB"/>
</dbReference>
<dbReference type="GO" id="GO:2001244">
    <property type="term" value="P:positive regulation of intrinsic apoptotic signaling pathway"/>
    <property type="evidence" value="ECO:0000250"/>
    <property type="project" value="UniProtKB"/>
</dbReference>
<dbReference type="GO" id="GO:1902998">
    <property type="term" value="P:positive regulation of neurofibrillary tangle assembly"/>
    <property type="evidence" value="ECO:0000250"/>
    <property type="project" value="Alzheimers_University_of_Toronto"/>
</dbReference>
<dbReference type="GO" id="GO:0051092">
    <property type="term" value="P:positive regulation of NF-kappaB transcription factor activity"/>
    <property type="evidence" value="ECO:0000250"/>
    <property type="project" value="UniProtKB"/>
</dbReference>
<dbReference type="GO" id="GO:0045429">
    <property type="term" value="P:positive regulation of nitric oxide biosynthetic process"/>
    <property type="evidence" value="ECO:0000250"/>
    <property type="project" value="Alzheimers_University_of_Toronto"/>
</dbReference>
<dbReference type="GO" id="GO:0032436">
    <property type="term" value="P:positive regulation of proteasomal ubiquitin-dependent protein catabolic process"/>
    <property type="evidence" value="ECO:0000250"/>
    <property type="project" value="UniProtKB"/>
</dbReference>
<dbReference type="GO" id="GO:0031334">
    <property type="term" value="P:positive regulation of protein-containing complex assembly"/>
    <property type="evidence" value="ECO:0007669"/>
    <property type="project" value="Ensembl"/>
</dbReference>
<dbReference type="GO" id="GO:0048260">
    <property type="term" value="P:positive regulation of receptor-mediated endocytosis"/>
    <property type="evidence" value="ECO:0000250"/>
    <property type="project" value="UniProtKB"/>
</dbReference>
<dbReference type="GO" id="GO:0032760">
    <property type="term" value="P:positive regulation of tumor necrosis factor production"/>
    <property type="evidence" value="ECO:0000250"/>
    <property type="project" value="Alzheimers_University_of_Toronto"/>
</dbReference>
<dbReference type="GO" id="GO:2000060">
    <property type="term" value="P:positive regulation of ubiquitin-dependent protein catabolic process"/>
    <property type="evidence" value="ECO:0000250"/>
    <property type="project" value="UniProtKB"/>
</dbReference>
<dbReference type="GO" id="GO:0017038">
    <property type="term" value="P:protein import"/>
    <property type="evidence" value="ECO:0000250"/>
    <property type="project" value="Alzheimers_University_of_Toronto"/>
</dbReference>
<dbReference type="GO" id="GO:0050821">
    <property type="term" value="P:protein stabilization"/>
    <property type="evidence" value="ECO:0000250"/>
    <property type="project" value="UniProtKB"/>
</dbReference>
<dbReference type="GO" id="GO:0061740">
    <property type="term" value="P:protein targeting to lysosome involved in chaperone-mediated autophagy"/>
    <property type="evidence" value="ECO:0007669"/>
    <property type="project" value="Ensembl"/>
</dbReference>
<dbReference type="GO" id="GO:1900221">
    <property type="term" value="P:regulation of amyloid-beta clearance"/>
    <property type="evidence" value="ECO:0000250"/>
    <property type="project" value="Alzheimers_University_of_Toronto"/>
</dbReference>
<dbReference type="GO" id="GO:0042127">
    <property type="term" value="P:regulation of cell population proliferation"/>
    <property type="evidence" value="ECO:0000250"/>
    <property type="project" value="UniProtKB"/>
</dbReference>
<dbReference type="GO" id="GO:1902847">
    <property type="term" value="P:regulation of neuronal signal transduction"/>
    <property type="evidence" value="ECO:0000250"/>
    <property type="project" value="Alzheimers_University_of_Toronto"/>
</dbReference>
<dbReference type="GO" id="GO:0051788">
    <property type="term" value="P:response to misfolded protein"/>
    <property type="evidence" value="ECO:0000250"/>
    <property type="project" value="UniProtKB"/>
</dbReference>
<dbReference type="GO" id="GO:0009615">
    <property type="term" value="P:response to virus"/>
    <property type="evidence" value="ECO:0007669"/>
    <property type="project" value="Ensembl"/>
</dbReference>
<dbReference type="InterPro" id="IPR016016">
    <property type="entry name" value="Clusterin"/>
</dbReference>
<dbReference type="InterPro" id="IPR000753">
    <property type="entry name" value="Clusterin-like"/>
</dbReference>
<dbReference type="InterPro" id="IPR016015">
    <property type="entry name" value="Clusterin_C"/>
</dbReference>
<dbReference type="InterPro" id="IPR033986">
    <property type="entry name" value="Clusterin_CS"/>
</dbReference>
<dbReference type="InterPro" id="IPR016014">
    <property type="entry name" value="Clusterin_N"/>
</dbReference>
<dbReference type="PANTHER" id="PTHR10970">
    <property type="entry name" value="CLUSTERIN"/>
    <property type="match status" value="1"/>
</dbReference>
<dbReference type="PANTHER" id="PTHR10970:SF1">
    <property type="entry name" value="CLUSTERIN"/>
    <property type="match status" value="1"/>
</dbReference>
<dbReference type="Pfam" id="PF01093">
    <property type="entry name" value="Clusterin"/>
    <property type="match status" value="1"/>
</dbReference>
<dbReference type="PIRSF" id="PIRSF002368">
    <property type="entry name" value="Clusterin"/>
    <property type="match status" value="1"/>
</dbReference>
<dbReference type="SMART" id="SM00035">
    <property type="entry name" value="CLa"/>
    <property type="match status" value="1"/>
</dbReference>
<dbReference type="SMART" id="SM00030">
    <property type="entry name" value="CLb"/>
    <property type="match status" value="1"/>
</dbReference>
<dbReference type="PROSITE" id="PS00492">
    <property type="entry name" value="CLUSTERIN_1"/>
    <property type="match status" value="1"/>
</dbReference>
<dbReference type="PROSITE" id="PS00493">
    <property type="entry name" value="CLUSTERIN_2"/>
    <property type="match status" value="1"/>
</dbReference>
<comment type="function">
    <text evidence="2 3 5 6 7">Functions as extracellular chaperone that prevents aggregation of non native proteins. Prevents stress-induced aggregation of blood plasma proteins (By similarity). Inhibits formation of amyloid fibrils by APP, APOC2, B2M, CALCA, CSN3, SNCA and aggregation-prone LYZ variants (in vitro) (PubMed:14741101). Does not require ATP. Maintains partially unfolded proteins in a state appropriate for subsequent refolding by other chaperones, such as HSPA8/HSC70. Does not refold proteins by itself. Binding to cell surface receptors triggers internalization of the chaperone-client complex and subsequent lysosomal or proteasomal degradation. When secreted, protects cells against apoptosis and against cytolysis by complement: inhibits assembly of the complement membrane attack complex (MAC) by preventing polymerization of C9 pore component of the MAC complex. Intracellular forms interact with ubiquitin and SCF (SKP1-CUL1-F-box protein) E3 ubiquitin-protein ligase complexes and promote the ubiquitination and subsequent proteasomal degradation of target proteins. Promotes proteasomal degradation of COMMD1 and IKBKB. Modulates NF-kappa-B transcriptional activity (By similarity). Following stress, promotes apoptosis (PubMed:12551933). Inhibits apoptosis when associated with the mitochondrial membrane by interference with BAX-dependent release of cytochrome c into the cytoplasm. Plays a role in the regulation of cell proliferation. Following ER stress, suppresses stress-induced apoptosis by stabilizing mitochondrial membrane integrity through interaction with HSPA5. When secreted, does not affect caspase or BAX-mediated intrinsic apoptosis and TNF-induced NF-kappa-B-activity (By similarity). When secreted, acts as an important modulator during neuronal differentiation through interaction with STMN3 (By similarity). Plays a role in the clearance of immune complexes that arise during cell injury (PubMed:11865066).</text>
</comment>
<comment type="subunit">
    <text evidence="2 3 6">Antiparallel disulfide-linked heterodimer of an alpha chain and a beta chain. Self-associates and forms higher oligomers. Interacts with a broad range of misfolded proteins, including APP, APOC2 and LYZ. Slightly acidic pH promotes interaction with misfolded proteins. Forms high-molecular weight oligomers upon interaction with misfolded proteins. Interacts with APOA1, LRP2, CLUAP1 and PON1. Interacts with the complement membrane attack complex (By similarity). Interacts (via alpha chain) with XRCC6 (PubMed:12551933). Interacts with SYVN1, COMMD1, BTRC, CUL1 and with ubiquitin and SCF (SKP1-CUL1-F-box protein) E3 ubiquitin-protein ligase complexes. Interacts (via alpha chain) with BAX in stressed cells, where BAX undergoes a conformation change leading to association with the mitochondrial membrane. Does not interact with BAX in unstressed cells. Found in a complex with LTF, CLU, EPPIN and SEMG1. Interacts (immaturely glycosylated pre-secreted form) with HSPA5; this interaction promotes CLU stability and facilitates stress-induced CLU retrotranslocation from the secretory pathway to the mitochondria, thereby reducing stress-induced apoptosis by stabilizing mitochondrial membrane integrity. Interacts with BCL2L1; this interaction releases and activates BAX and promotes cell death. Interacts with TGFBR2 and ACVR1 (By similarity). Interacts (secreted form) with STMN3; this interaction may act as an important modulator during neuronal differentiation (By similarity). Interacts with VLDLR and LRP8 (By similarity).</text>
</comment>
<comment type="subcellular location">
    <subcellularLocation>
        <location evidence="6">Secreted</location>
    </subcellularLocation>
    <subcellularLocation>
        <location evidence="6">Nucleus</location>
    </subcellularLocation>
    <subcellularLocation>
        <location evidence="6">Cytoplasm</location>
    </subcellularLocation>
    <subcellularLocation>
        <location evidence="3">Mitochondrion membrane</location>
        <topology evidence="3">Peripheral membrane protein</topology>
        <orientation evidence="3">Cytoplasmic side</orientation>
    </subcellularLocation>
    <subcellularLocation>
        <location evidence="6">Cytoplasm</location>
        <location evidence="6">Cytosol</location>
    </subcellularLocation>
    <subcellularLocation>
        <location evidence="3">Microsome</location>
    </subcellularLocation>
    <subcellularLocation>
        <location evidence="3">Endoplasmic reticulum</location>
    </subcellularLocation>
    <subcellularLocation>
        <location evidence="3">Mitochondrion</location>
    </subcellularLocation>
    <subcellularLocation>
        <location evidence="3">Mitochondrion membrane</location>
    </subcellularLocation>
    <subcellularLocation>
        <location evidence="2">Cytoplasm</location>
        <location evidence="2">Perinuclear region</location>
    </subcellularLocation>
    <subcellularLocation>
        <location evidence="3">Cytoplasmic vesicle</location>
        <location evidence="3">Secretory vesicle</location>
        <location evidence="3">Chromaffin granule</location>
    </subcellularLocation>
    <text evidence="3">Can retrotranslocate from the secretory compartments to the cytosol upon cellular stress. Detected in perinuclear foci that may be aggresomes containing misfolded, ubiquitinated proteins. Detected at the mitochondrion membrane upon induction of apoptosis. Under ER stress, a immaturely glycosylated pre-secreted form retrotranslocates from the endoplasmic reticulum (ER)-Golgi network to the cytoplasm to localize in the mitochondria through HSPA5 interaction. ER stress reduces secretion. Under the stress, minor amounts of non-secreted forms accumulate in cytoplasm.</text>
</comment>
<comment type="tissue specificity">
    <text>Most abundant in stomach, liver, brain, and testis, with intermediate levels in heart, ovary and kidney.</text>
</comment>
<comment type="PTM">
    <text evidence="3">Proteolytically cleaved on its way through the secretory system, probably within the Golgi lumen. Proteolytic cleavage is not necessary for its chaperone activity. All non-secreted forms are not proteolytically cleaved. Chaperone activity of uncleaved forms is dependent on a non-reducing environment.</text>
</comment>
<comment type="PTM">
    <text evidence="3">Polyubiquitinated, leading to proteasomal degradation. Under cellular stress, the intracellular level of cleaved form is reduced due to proteasomal degradation.</text>
</comment>
<comment type="PTM">
    <text evidence="3">Extensively glycosylated with sulfated N-linked carbohydrates (By similarity). About 30% of the protein mass is comprised of complex N-linked carbohydrate. Endoplasmic reticulum (ER) stress induces changes in glycosylation status and increases level of hypoglycosylated forms. Core carbohydrates are essential for chaperone activity. Non-secreted forms are hypoglycosylated or unglycosylated (By similarity).</text>
</comment>
<comment type="disruption phenotype">
    <text evidence="4 5">No visible phenotype (PubMed:11067863, PubMed:11865066). During myocarditis, mice show an increased tendency to cardiac tissue injury (PubMed:11067863). Homozygous CLU aging mice exhibit a striking glomerulopathy characterized by progressive mesangial expansion and collapse of capillary lumens (PubMed:11865066).</text>
</comment>
<comment type="similarity">
    <text evidence="14">Belongs to the clusterin family.</text>
</comment>
<reference key="1">
    <citation type="journal article" date="1993" name="Biochem. Biophys. Res. Commun.">
        <title>Molecular cloning and sequencing of sulfated glycoprotein-2 cDNA from testis of mouse: implications of two different mRNAs of SGP-2.</title>
        <authorList>
            <person name="Lee K.-H."/>
            <person name="Ji Y.-M."/>
            <person name="Lim H.M."/>
            <person name="Lee S.-C."/>
            <person name="You K.-H."/>
        </authorList>
    </citation>
    <scope>NUCLEOTIDE SEQUENCE [MRNA]</scope>
    <source>
        <tissue>Testis</tissue>
    </source>
</reference>
<reference key="2">
    <citation type="journal article" date="1993" name="J. Cell Biol.">
        <title>Murine clusterin: molecular cloning and mRNA localization of a gene associated with epithelial differentiation processes during embryogenesis.</title>
        <authorList>
            <person name="French L.E."/>
            <person name="Chonn A."/>
            <person name="Ducrest D."/>
            <person name="Baumann B."/>
            <person name="Belin D."/>
            <person name="Wohlwend A."/>
            <person name="Kiss J.Z."/>
            <person name="Sappino A.P."/>
            <person name="Tschopp J."/>
            <person name="Schifferli J.A."/>
        </authorList>
    </citation>
    <scope>NUCLEOTIDE SEQUENCE [MRNA]</scope>
    <source>
        <strain>BALB/cJ</strain>
        <tissue>Heart</tissue>
    </source>
</reference>
<reference key="3">
    <citation type="journal article" date="1994" name="J. Lipid Res.">
        <title>Mouse apolipoprotein J: characterization of a gene implicated in atherosclerosis.</title>
        <authorList>
            <person name="Jordan-Starck T.C."/>
            <person name="Lund S.D."/>
            <person name="Witte D.P."/>
            <person name="Aronow B.J."/>
            <person name="Ley C.A."/>
            <person name="Stuart W.D."/>
            <person name="Swertfeger D.K."/>
            <person name="Clayton L.R."/>
            <person name="Sells S.F."/>
            <person name="Paigen B."/>
        </authorList>
    </citation>
    <scope>NUCLEOTIDE SEQUENCE [MRNA]</scope>
    <source>
        <strain>C57BL/6 X CBA</strain>
        <tissue>Liver</tissue>
    </source>
</reference>
<reference key="4">
    <citation type="submission" date="1992-11" db="EMBL/GenBank/DDBJ databases">
        <title>Secretion of sulfated glycoprotein (clustrin) accompanies cytodifferentiation and structural remodeling of mouse BC3H1 myogenic cells.</title>
        <authorList>
            <person name="Hodgdon B.A."/>
            <person name="Min B.H."/>
            <person name="Yan H."/>
            <person name="Farris J.A."/>
            <person name="Foster D.N."/>
            <person name="Strauch A.R."/>
        </authorList>
    </citation>
    <scope>NUCLEOTIDE SEQUENCE [MRNA]</scope>
</reference>
<reference key="5">
    <citation type="journal article" date="2004" name="Genome Res.">
        <title>The status, quality, and expansion of the NIH full-length cDNA project: the Mammalian Gene Collection (MGC).</title>
        <authorList>
            <consortium name="The MGC Project Team"/>
        </authorList>
    </citation>
    <scope>NUCLEOTIDE SEQUENCE [LARGE SCALE MRNA]</scope>
    <source>
        <strain>C57BL/6J</strain>
        <tissue>Eye</tissue>
    </source>
</reference>
<reference key="6">
    <citation type="journal article" date="2000" name="J. Clin. Invest.">
        <title>Apolipoprotein J/clusterin limits the severity of murine autoimmune myocarditis.</title>
        <authorList>
            <person name="McLaughlin L."/>
            <person name="Zhu G."/>
            <person name="Mistry M."/>
            <person name="Ley-Ebert C."/>
            <person name="Stuart W.D."/>
            <person name="Florio C.J."/>
            <person name="Groen P.A."/>
            <person name="Witt S.A."/>
            <person name="Kimball T.R."/>
            <person name="Witte D.P."/>
            <person name="Harmony J.A."/>
            <person name="Aronow B.J."/>
        </authorList>
    </citation>
    <scope>DISRUPTION PHENOTYPE</scope>
</reference>
<reference key="7">
    <citation type="journal article" date="2002" name="Mol. Cell. Biol.">
        <title>Apolipoprotein J/clusterin prevents a progressive glomerulopathy of aging.</title>
        <authorList>
            <person name="Rosenberg M.E."/>
            <person name="Girton R."/>
            <person name="Finkel D."/>
            <person name="Chmielewski D."/>
            <person name="Barrie A. III"/>
            <person name="Witte D.P."/>
            <person name="Zhu G."/>
            <person name="Bissler J.J."/>
            <person name="Harmony J.A."/>
            <person name="Aronow B.J."/>
        </authorList>
    </citation>
    <scope>DISRUPTION PHENOTYPE</scope>
    <scope>FUNCTION</scope>
</reference>
<reference key="8">
    <citation type="journal article" date="2003" name="J. Biol. Chem.">
        <title>Synthesis and functional analyses of nuclear clusterin, a cell death protein.</title>
        <authorList>
            <person name="Leskov K.S."/>
            <person name="Klokov D.Y."/>
            <person name="Li J."/>
            <person name="Kinsella T.J."/>
            <person name="Boothman D.A."/>
        </authorList>
    </citation>
    <scope>INTERACTION WITH XRCC6</scope>
    <scope>SUBCELLULAR LOCATION</scope>
    <scope>MUTAGENESIS OF 78-LYS-LYS-79; LEU-343; 357-LEU-LEU-358; LEU-361; LEU-371 AND 442-ARG-ARG-443</scope>
    <scope>FUNCTION</scope>
    <scope>MOTIF</scope>
</reference>
<reference key="9">
    <citation type="journal article" date="2004" name="Neuron">
        <title>ApoE and clusterin cooperatively suppress Abeta levels and deposition: evidence that ApoE regulates extracellular Abeta metabolism in vivo.</title>
        <authorList>
            <person name="DeMattos R.B."/>
            <person name="Cirrito J.R."/>
            <person name="Parsadanian M."/>
            <person name="May P.C."/>
            <person name="O'Dell M.A."/>
            <person name="Taylor J.W."/>
            <person name="Harmony J.A."/>
            <person name="Aronow B.J."/>
            <person name="Bales K.R."/>
            <person name="Paul S.M."/>
            <person name="Holtzman D.M."/>
        </authorList>
    </citation>
    <scope>FUNCTION</scope>
</reference>
<reference key="10">
    <citation type="journal article" date="2006" name="J. Proteome Res.">
        <title>Proteome-wide characterization of N-glycosylation events by diagonal chromatography.</title>
        <authorList>
            <person name="Ghesquiere B."/>
            <person name="Van Damme J."/>
            <person name="Martens L."/>
            <person name="Vandekerckhove J."/>
            <person name="Gevaert K."/>
        </authorList>
    </citation>
    <scope>GLYCOSYLATION [LARGE SCALE ANALYSIS] AT ASN-327</scope>
    <source>
        <strain>C57BL/6J</strain>
        <tissue>Plasma</tissue>
    </source>
</reference>
<reference key="11">
    <citation type="journal article" date="2007" name="J. Proteome Res.">
        <title>Enhanced analysis of the mouse plasma proteome using cysteine-containing tryptic glycopeptides.</title>
        <authorList>
            <person name="Bernhard O.K."/>
            <person name="Kapp E.A."/>
            <person name="Simpson R.J."/>
        </authorList>
    </citation>
    <scope>GLYCOSYLATION [LARGE SCALE ANALYSIS] AT ASN-290</scope>
    <source>
        <strain>C57BL/6J</strain>
        <tissue>Plasma</tissue>
    </source>
</reference>
<reference key="12">
    <citation type="journal article" date="2010" name="Cell">
        <title>A tissue-specific atlas of mouse protein phosphorylation and expression.</title>
        <authorList>
            <person name="Huttlin E.L."/>
            <person name="Jedrychowski M.P."/>
            <person name="Elias J.E."/>
            <person name="Goswami T."/>
            <person name="Rad R."/>
            <person name="Beausoleil S.A."/>
            <person name="Villen J."/>
            <person name="Haas W."/>
            <person name="Sowa M.E."/>
            <person name="Gygi S.P."/>
        </authorList>
    </citation>
    <scope>IDENTIFICATION BY MASS SPECTROMETRY [LARGE SCALE ANALYSIS]</scope>
    <source>
        <tissue>Brain</tissue>
        <tissue>Brown adipose tissue</tissue>
        <tissue>Heart</tissue>
        <tissue>Kidney</tissue>
        <tissue>Liver</tissue>
        <tissue>Lung</tissue>
        <tissue>Pancreas</tissue>
        <tissue>Spleen</tissue>
        <tissue>Testis</tissue>
    </source>
</reference>
<accession>Q06890</accession>
<proteinExistence type="evidence at protein level"/>
<evidence type="ECO:0000250" key="1"/>
<evidence type="ECO:0000250" key="2">
    <source>
        <dbReference type="UniProtKB" id="P05371"/>
    </source>
</evidence>
<evidence type="ECO:0000250" key="3">
    <source>
        <dbReference type="UniProtKB" id="P10909"/>
    </source>
</evidence>
<evidence type="ECO:0000269" key="4">
    <source>
    </source>
</evidence>
<evidence type="ECO:0000269" key="5">
    <source>
    </source>
</evidence>
<evidence type="ECO:0000269" key="6">
    <source>
    </source>
</evidence>
<evidence type="ECO:0000269" key="7">
    <source>
    </source>
</evidence>
<evidence type="ECO:0000269" key="8">
    <source>
    </source>
</evidence>
<evidence type="ECO:0000269" key="9">
    <source>
    </source>
</evidence>
<evidence type="ECO:0000303" key="10">
    <source>
    </source>
</evidence>
<evidence type="ECO:0000303" key="11">
    <source>
    </source>
</evidence>
<evidence type="ECO:0000303" key="12">
    <source>
    </source>
</evidence>
<evidence type="ECO:0000303" key="13">
    <source ref="4"/>
</evidence>
<evidence type="ECO:0000305" key="14"/>
<evidence type="ECO:0000312" key="15">
    <source>
        <dbReference type="MGI" id="MGI:88423"/>
    </source>
</evidence>
<sequence length="448" mass="51656">MKILLLCVALLLIWDNGMVLGEQEVSDNELQELSTQGSRYINKEIQNAVQGVKHIKTLIEKTNAERKSLLNSLEEAKKKKEDALEDTRDSEMKLKAFPEVCNETMMALWEECKPCLKHTCMKFYARVCRSGSGLVGQQLEEFLNQSSPFYFWMNGDRIDSLLESDRQQSQVLDAMQDSFARASGIIDTLFQDRFFARELHDPHYFSPIGFPHKRPHFLYPKSRLVRSLMSPSHYGPPSFHNMFQPFFEMIHQAQQAMDVQLHSPAFQFPDVDFLREGEDDRTVCKEIRRNSTGCLKMKGQCEKCQEILSVDCSTNNPAQANLRQELNDSLQVAERLTEQYKELLQSFQSKMLNTSSLLEQLNDQFNWVSQLANLTQGEDKYYLRVSTVTTHSSDSEVPSRVTEVVVKLFDSDPITVVLPEEVSKDNPKFMDTVAEKALQEYRRKSRAE</sequence>
<keyword id="KW-0143">Chaperone</keyword>
<keyword id="KW-0963">Cytoplasm</keyword>
<keyword id="KW-0968">Cytoplasmic vesicle</keyword>
<keyword id="KW-1015">Disulfide bond</keyword>
<keyword id="KW-0256">Endoplasmic reticulum</keyword>
<keyword id="KW-0325">Glycoprotein</keyword>
<keyword id="KW-0472">Membrane</keyword>
<keyword id="KW-0492">Microsome</keyword>
<keyword id="KW-0496">Mitochondrion</keyword>
<keyword id="KW-0539">Nucleus</keyword>
<keyword id="KW-0597">Phosphoprotein</keyword>
<keyword id="KW-1185">Reference proteome</keyword>
<keyword id="KW-0964">Secreted</keyword>
<keyword id="KW-0732">Signal</keyword>
<keyword id="KW-0832">Ubl conjugation</keyword>
<feature type="signal peptide" evidence="1">
    <location>
        <begin position="1"/>
        <end position="21"/>
    </location>
</feature>
<feature type="chain" id="PRO_0000005535" description="Clusterin">
    <location>
        <begin position="22"/>
        <end position="448"/>
    </location>
</feature>
<feature type="chain" id="PRO_0000005536" description="Clusterin beta chain" evidence="1">
    <location>
        <begin position="22"/>
        <end position="226"/>
    </location>
</feature>
<feature type="chain" id="PRO_0000005537" description="Clusterin alpha chain" evidence="1">
    <location>
        <begin position="227"/>
        <end position="447"/>
    </location>
</feature>
<feature type="short sequence motif" description="Nuclear localization signal" evidence="6">
    <location>
        <begin position="77"/>
        <end position="80"/>
    </location>
</feature>
<feature type="short sequence motif" description="Nuclear localization signal" evidence="6">
    <location>
        <begin position="442"/>
        <end position="446"/>
    </location>
</feature>
<feature type="modified residue" description="Phosphoserine" evidence="3">
    <location>
        <position position="132"/>
    </location>
</feature>
<feature type="modified residue" description="Phosphoserine" evidence="3">
    <location>
        <position position="395"/>
    </location>
</feature>
<feature type="glycosylation site" description="N-linked (GlcNAc...) asparagine" evidence="14">
    <location>
        <position position="102"/>
    </location>
</feature>
<feature type="glycosylation site" description="N-linked (GlcNAc...) asparagine" evidence="14">
    <location>
        <position position="144"/>
    </location>
</feature>
<feature type="glycosylation site" description="N-linked (GlcNAc...) asparagine" evidence="9">
    <location>
        <position position="290"/>
    </location>
</feature>
<feature type="glycosylation site" description="N-linked (GlcNAc...) asparagine" evidence="8">
    <location>
        <position position="327"/>
    </location>
</feature>
<feature type="glycosylation site" description="N-linked (GlcNAc...) asparagine" evidence="14">
    <location>
        <position position="353"/>
    </location>
</feature>
<feature type="glycosylation site" description="N-linked (GlcNAc...) asparagine" evidence="14">
    <location>
        <position position="373"/>
    </location>
</feature>
<feature type="disulfide bond" description="Interchain (between beta and alpha chains)" evidence="1">
    <location>
        <begin position="101"/>
        <end position="312"/>
    </location>
</feature>
<feature type="disulfide bond" description="Interchain (between beta and alpha chains)" evidence="1">
    <location>
        <begin position="112"/>
        <end position="304"/>
    </location>
</feature>
<feature type="disulfide bond" description="Interchain (between beta and alpha chains)" evidence="1">
    <location>
        <begin position="115"/>
        <end position="301"/>
    </location>
</feature>
<feature type="disulfide bond" description="Interchain (between beta and alpha chains)" evidence="1">
    <location>
        <begin position="120"/>
        <end position="294"/>
    </location>
</feature>
<feature type="disulfide bond" description="Interchain (between beta and alpha chains)" evidence="1">
    <location>
        <begin position="128"/>
        <end position="284"/>
    </location>
</feature>
<feature type="mutagenesis site" description="Reduced nuclear location." evidence="6">
    <original>KK</original>
    <variation>AV</variation>
    <location>
        <begin position="78"/>
        <end position="79"/>
    </location>
</feature>
<feature type="mutagenesis site" description="Abolishes interaction with XRCC6." evidence="6">
    <original>L</original>
    <variation>P</variation>
    <location>
        <position position="343"/>
    </location>
</feature>
<feature type="mutagenesis site" description="Abolishes interaction with XRCC6." evidence="6">
    <original>LL</original>
    <variation>RQ</variation>
    <location>
        <begin position="357"/>
        <end position="358"/>
    </location>
</feature>
<feature type="mutagenesis site" description="Abolishes interaction with XRCC6." evidence="6">
    <original>L</original>
    <variation>R</variation>
    <location>
        <position position="361"/>
    </location>
</feature>
<feature type="mutagenesis site" description="Strongly reduced interaction with XRCC6." evidence="6">
    <original>L</original>
    <variation>R</variation>
    <location>
        <position position="371"/>
    </location>
</feature>
<feature type="mutagenesis site" description="Strongly reduced nuclear location." evidence="6">
    <original>RR</original>
    <variation>VV</variation>
    <location>
        <begin position="442"/>
        <end position="443"/>
    </location>
</feature>
<feature type="sequence conflict" description="In Ref. 3; AAB30623." evidence="14" ref="3">
    <original>L</original>
    <variation>M</variation>
    <location>
        <position position="10"/>
    </location>
</feature>
<feature type="sequence conflict" description="In Ref. 4; AAA37284." evidence="14" ref="4">
    <original>RL</original>
    <variation>TV</variation>
    <location>
        <begin position="335"/>
        <end position="336"/>
    </location>
</feature>
<feature type="sequence conflict" description="In Ref. 4; AAA37284." evidence="14" ref="4">
    <original>K</original>
    <variation>N</variation>
    <location>
        <position position="350"/>
    </location>
</feature>
<gene>
    <name evidence="15" type="primary">Clu</name>
    <name evidence="11" type="synonym">Apoj</name>
    <name type="synonym">Msgp-2</name>
</gene>
<protein>
    <recommendedName>
        <fullName evidence="12">Clusterin</fullName>
    </recommendedName>
    <alternativeName>
        <fullName evidence="11">Apolipoprotein J</fullName>
        <shortName>Apo-J</shortName>
    </alternativeName>
    <alternativeName>
        <fullName evidence="13">Clustrin</fullName>
    </alternativeName>
    <alternativeName>
        <fullName evidence="10">Sulfated glycoprotein 2</fullName>
        <shortName evidence="10">SGP-2</shortName>
    </alternativeName>
    <component>
        <recommendedName>
            <fullName>Clusterin beta chain</fullName>
        </recommendedName>
    </component>
    <component>
        <recommendedName>
            <fullName>Clusterin alpha chain</fullName>
        </recommendedName>
    </component>
</protein>